<proteinExistence type="evidence at protein level"/>
<comment type="function">
    <text evidence="8 10">Member of the NMDAR signaling complex that may play a role in control of AMPAR potentiation and synaptic plasticity in excitatory synapses (PubMed:15312654). Promotes clustering of HT2RC at the cell surface (PubMed:11150294).</text>
</comment>
<comment type="subunit">
    <text evidence="1 3 7 8 9 10 11">Interacts with F11R/JAM, CLDN1, NG2, CXADR, CRB1, MPP4 and PALS1, HTR2A, HTR2B, PLEKHA1/TAPP1 and PLEKHA2/TAPP2. Interacts with CXADR (By similarity). Interacts with HTR2C, CLDN5, DLG4, GRIN1, SYNGAP1, CAMK2A and CAMK2B. Interacts with FAT4 (via cytoplasmic domain) (By similarity). Interacts with DLL1 (By similarity).</text>
</comment>
<comment type="interaction">
    <interactant intactId="EBI-7401093">
        <id>O55164</id>
    </interactant>
    <interactant intactId="EBI-6266935">
        <id>P32745</id>
        <label>SSTR3</label>
    </interactant>
    <organismsDiffer>true</organismsDiffer>
    <experiments>2</experiments>
</comment>
<comment type="subcellular location">
    <subcellularLocation>
        <location>Endomembrane system</location>
    </subcellularLocation>
    <subcellularLocation>
        <location>Cell junction</location>
        <location>Tight junction</location>
    </subcellularLocation>
    <subcellularLocation>
        <location>Synapse</location>
    </subcellularLocation>
    <subcellularLocation>
        <location evidence="8">Apical cell membrane</location>
    </subcellularLocation>
    <subcellularLocation>
        <location>Postsynaptic density</location>
    </subcellularLocation>
    <subcellularLocation>
        <location>Cell projection</location>
        <location>Dendrite</location>
    </subcellularLocation>
    <subcellularLocation>
        <location>Synapse</location>
        <location>Synaptosome</location>
    </subcellularLocation>
    <text evidence="1 8">Associated with membranes. Enriched at the tight junctions of epithelial cells. Association to the tight junctions depends on CXADR. In the retina, localizes to the sub-apical region adjacent to the adherens junction complex at the outer limiting membrane (By similarity). Colocalizes with HTR2C on the apical membrane of epithelial choroid plexus cells (PubMed:11150294). Localized mainly in the Schmidt-Lanterman incisures of myelinating Schwann cells. Highly enriched in postsynaptic densities (PSD). Localized to punctae on dendrites of hippocampal neurons and colocalizes with the synaptic marker DLG4.</text>
</comment>
<comment type="tissue specificity">
    <text evidence="8">Abundant in all cerebral cortical layers, especially the piriform cortex, the pyramidal cells of the CA1-CA3 subfields of the hippocampus, as well as the granular layer of the dentate gyrus. Detected in the internal granular layer and the mitral cell layer of the olfactory bulb; in the medial habenular nucleus; and in amygdaloid, thalamic, hypothalamic, and pontine nuclei. In the cerebellum, found at high levels in the granular layer. Detected in the lateral ventricle. Expression overlaps with 5-HT2C receptor expression in all regions of the brain including the choroid plexus, where 5-HT2C receptors are highly enriched.</text>
</comment>
<comment type="domain">
    <text evidence="1 7 8">The PDZ domain 1 binds NG2. The PDZ domain 2 mainly binds CAMK2A and CAMK2B. The PDZ domain 9 binds F11R. The PDZ domain 10 binds the C-terminus of CLDN1 and KIT. The PDZ domains 10 and 13 bind PLEKHA1 and PLEKHA2. The PDZ domain 13 binds CXADR and SYNGAP1 (By similarity). The PDZ domains 7 and 10 bind the Ad9 E4-ORF1 oncoprotein. The PDZ domain 10 binds the C-terminal PDZ-binding motif of HTR2C.</text>
</comment>
<comment type="miscellaneous">
    <text>Sequestered into cytoplasmic, detergent-resistant bodies upon Ad9 E4-ORF1 oncoprotein expression. Targeted to degradation upon HPV-18 E6 oncoprotein expression.</text>
</comment>
<organism>
    <name type="scientific">Rattus norvegicus</name>
    <name type="common">Rat</name>
    <dbReference type="NCBI Taxonomy" id="10116"/>
    <lineage>
        <taxon>Eukaryota</taxon>
        <taxon>Metazoa</taxon>
        <taxon>Chordata</taxon>
        <taxon>Craniata</taxon>
        <taxon>Vertebrata</taxon>
        <taxon>Euteleostomi</taxon>
        <taxon>Mammalia</taxon>
        <taxon>Eutheria</taxon>
        <taxon>Euarchontoglires</taxon>
        <taxon>Glires</taxon>
        <taxon>Rodentia</taxon>
        <taxon>Myomorpha</taxon>
        <taxon>Muroidea</taxon>
        <taxon>Muridae</taxon>
        <taxon>Murinae</taxon>
        <taxon>Rattus</taxon>
    </lineage>
</organism>
<name>MPDZ_RAT</name>
<feature type="chain" id="PRO_0000094596" description="Multiple PDZ domain protein">
    <location>
        <begin position="1"/>
        <end position="2054"/>
    </location>
</feature>
<feature type="domain" description="L27" evidence="5">
    <location>
        <begin position="3"/>
        <end position="63"/>
    </location>
</feature>
<feature type="domain" description="PDZ 1" evidence="4">
    <location>
        <begin position="138"/>
        <end position="225"/>
    </location>
</feature>
<feature type="domain" description="PDZ 2" evidence="4">
    <location>
        <begin position="258"/>
        <end position="338"/>
    </location>
</feature>
<feature type="domain" description="PDZ 3" evidence="4">
    <location>
        <begin position="377"/>
        <end position="463"/>
    </location>
</feature>
<feature type="domain" description="PDZ 4" evidence="4">
    <location>
        <begin position="545"/>
        <end position="626"/>
    </location>
</feature>
<feature type="domain" description="PDZ 5" evidence="4">
    <location>
        <begin position="692"/>
        <end position="778"/>
    </location>
</feature>
<feature type="domain" description="PDZ 6" evidence="4">
    <location>
        <begin position="995"/>
        <end position="1076"/>
    </location>
</feature>
<feature type="domain" description="PDZ 7" evidence="4">
    <location>
        <begin position="1138"/>
        <end position="1230"/>
    </location>
</feature>
<feature type="domain" description="PDZ 8" evidence="4">
    <location>
        <begin position="1337"/>
        <end position="1420"/>
    </location>
</feature>
<feature type="domain" description="PDZ 9" evidence="4">
    <location>
        <begin position="1470"/>
        <end position="1551"/>
    </location>
</feature>
<feature type="domain" description="PDZ 10" evidence="4">
    <location>
        <begin position="1613"/>
        <end position="1696"/>
    </location>
</feature>
<feature type="domain" description="PDZ 11" evidence="4">
    <location>
        <begin position="1709"/>
        <end position="1791"/>
    </location>
</feature>
<feature type="domain" description="PDZ 12" evidence="4">
    <location>
        <begin position="1846"/>
        <end position="1932"/>
    </location>
</feature>
<feature type="domain" description="PDZ 13" evidence="4">
    <location>
        <begin position="1971"/>
        <end position="2054"/>
    </location>
</feature>
<feature type="region of interest" description="Disordered" evidence="6">
    <location>
        <begin position="1110"/>
        <end position="1129"/>
    </location>
</feature>
<feature type="region of interest" description="Disordered" evidence="6">
    <location>
        <begin position="1261"/>
        <end position="1312"/>
    </location>
</feature>
<feature type="region of interest" description="Disordered" evidence="6">
    <location>
        <begin position="1433"/>
        <end position="1454"/>
    </location>
</feature>
<feature type="region of interest" description="Disordered" evidence="6">
    <location>
        <begin position="1560"/>
        <end position="1594"/>
    </location>
</feature>
<feature type="region of interest" description="Disordered" evidence="6">
    <location>
        <begin position="1795"/>
        <end position="1834"/>
    </location>
</feature>
<feature type="compositionally biased region" description="Polar residues" evidence="6">
    <location>
        <begin position="1261"/>
        <end position="1273"/>
    </location>
</feature>
<feature type="compositionally biased region" description="Low complexity" evidence="6">
    <location>
        <begin position="1283"/>
        <end position="1297"/>
    </location>
</feature>
<feature type="compositionally biased region" description="Low complexity" evidence="6">
    <location>
        <begin position="1802"/>
        <end position="1834"/>
    </location>
</feature>
<feature type="modified residue" description="Phosphoserine" evidence="2">
    <location>
        <position position="231"/>
    </location>
</feature>
<feature type="modified residue" description="Phosphoserine" evidence="2">
    <location>
        <position position="782"/>
    </location>
</feature>
<feature type="modified residue" description="Phosphoserine" evidence="2">
    <location>
        <position position="1065"/>
    </location>
</feature>
<feature type="modified residue" description="Omega-N-methylarginine" evidence="3">
    <location>
        <position position="1157"/>
    </location>
</feature>
<feature type="modified residue" description="Phosphoserine" evidence="2">
    <location>
        <position position="1802"/>
    </location>
</feature>
<feature type="modified residue" description="Phosphoserine" evidence="12">
    <location>
        <position position="1808"/>
    </location>
</feature>
<feature type="helix" evidence="13">
    <location>
        <begin position="6"/>
        <end position="24"/>
    </location>
</feature>
<feature type="helix" evidence="13">
    <location>
        <begin position="30"/>
        <end position="41"/>
    </location>
</feature>
<feature type="helix" evidence="13">
    <location>
        <begin position="43"/>
        <end position="61"/>
    </location>
</feature>
<feature type="helix" evidence="14">
    <location>
        <begin position="1321"/>
        <end position="1328"/>
    </location>
</feature>
<feature type="strand" evidence="14">
    <location>
        <begin position="1331"/>
        <end position="1341"/>
    </location>
</feature>
<feature type="strand" evidence="14">
    <location>
        <begin position="1349"/>
        <end position="1353"/>
    </location>
</feature>
<feature type="strand" evidence="14">
    <location>
        <begin position="1358"/>
        <end position="1367"/>
    </location>
</feature>
<feature type="helix" evidence="14">
    <location>
        <begin position="1372"/>
        <end position="1376"/>
    </location>
</feature>
<feature type="strand" evidence="14">
    <location>
        <begin position="1384"/>
        <end position="1388"/>
    </location>
</feature>
<feature type="helix" evidence="14">
    <location>
        <begin position="1398"/>
        <end position="1407"/>
    </location>
</feature>
<feature type="strand" evidence="14">
    <location>
        <begin position="1410"/>
        <end position="1418"/>
    </location>
</feature>
<sequence>MLETIDKNRALQAAERLQSKLKERGDVANEDKLSLLKSVLQSPLFSQILSLQTSLQQLKDQVNVATLATANADHAHTPQFSSAIISNLQSESLLLSPSNGNLEAISGPGAPPAMDGKPACEELDQLIKSMAQGRHVEIFELLKPPCGGLGFSVVGLRSENRGELGIFVQEIQEGSVAHRDGRLKETDQILAINGQVLDQTITHQQAISILQKAKDTIQLVIARGSLPHISSPRISRSPSAASTVSAHSNPTHWQHVETIELVNDGSGLGFGIIGGKATGVIVKTILPGGVADQHGRLCSGDHILKIGDTDLAGMSSEQVAQVLRQCGNRVKLMIARGAVEETPAPSSLGITLSSSTSTSEMRVDASTQKNEESETFDVELTKNVQGLGITIAGYIGDKKLEPSGIFVKSITKSSAVELDGRIQIGDQIVAVDGTNLQGFTNQQAVEVLRHTGQTVRLTLMRKGASQEAEITSREDTAKDVDLPAENYEKDEESLSLKRSTSILPIEEEGYPLLSTELEETEDVQQEAALLTKWQRIMGINYEIVVAHVSKFSENSGLGISLEATVGHHFIRSVLPEGPVGHSGKLFSGDELLEVNGINLLGENHQDVVNILKELPIDVTMVCCRRTVPPTALSEVDSLDIHDLELTEKPHIDLGEFIGSSETEDPMLAMSDVDQNAEEIQTPLAMWEAGIQAIELEKGSRGLGFSILDYQDPIDPANTVIVIRSLVPGGIAEKDGRLFPGDRLMFVNDINLENSTLEEAVEALKGAPSGMVRIGVAKPLPLSPEEGYVSAKEDTFLCSPHTCKEMGLSDKALFRADLALIDTPDAESVAESRFESQFSPDNDSVYSTQASVLSLHDGACSDGMNYGPSLPSSPPKDVTNSSDLVLGLHLSLEELYTQNLLQRQHAGSPPTDMSPAATSGFTVSDYTPANAVEQKYECANTVAWTPSQLPSGLSTTELAPALPAVAPKYLTEQSSLVSDAESVTLQSMSQEAFERTVTIAKGSSSLGMTVSANKDGLGVIVRSIIHGGAISRDGRIAVGDCILSINEESTISLTNAQARAMLRRHSLIGPDIKITYVPAEHLEEFRVSFGQQAGGIMALDIFSSYTGRDIPELPEREEGEGEESELQNAAYSSWSQPRRVELWREPSKSLGISIVGGRGMGSRLSNGEVMRGIFIKHVLEDSPAGKNGTLKPGDRIVEVDGMDLRDASHEQAVEAIRKAGSPVVFMVQSIVNRPRKSPLPSLPHSLYPKCSFSSTNPFAESLQLTSDKAPSQSESESEKATLCSVPSSSPSVFSEMSSDYAQPSATTVAEDEDKEDEFGYSWKNIQERYGTLTGQLHMIELEKGHSGLGLSLAGNKDRTRMSVFIVGIDPTGAAGRDGRLQIADELLEINGQILYGRSHQNASSIIKCAPSKVKIIFIRNADAVNQMAVCPGSAADPLPSTSESPQNKEVEPSITTSASAVDLSSLTNVYHLELPKDQGGLGIAICEEDTLNGVTIKSLTERGGAAKDGRLKPGDRILAVDDELVAGCPIEKFISLLKTAKTTVKLTVGAENPGCQAVPSAAVTASGERKDSSQTPAVPAPDLEPIPSTSRSSTPAIFASDPATCPIIPGCETTIEISKGQTGLGLSIVGGSDTLLGAIIIHEVYEEGAACKDGRLWAGDQILEVNGIDLRKATHDEAINVLRQTPQRVRLTLYRDEAPYKEEDVCDTFTVELQKRPGKGLGLSIVGKRNDTGVFVSDIVKGGIADADGRLMQGDQILMVNGEDVRNATQEAVAALLKCSLGTVTLEVGRIKAAPFHSERRPSQSSQVSESSLSSFSLPRSGIHTSESSESSAKKNALASEIQGLRTVEIKKGPADALGLSIAGGVGSPLGDVPIFIAMMHPNGVAAQTQKLRVGDRIVTICGTSTDGMTHTQAVNLMKNASGSIEVQVVAGGDVSVVTGHQQELANPCLAFTGLTSSTIFPDDLGPPQSKTITLDRGPDGLGFSIVGGYGSPHGDLPIYVKTVFAKGAAAEDGRLKRGDQIIAVNGQSLEGVTHEEAVAILKRTKGTVTLMVLS</sequence>
<dbReference type="EMBL" id="AJ001320">
    <property type="protein sequence ID" value="CAA04681.1"/>
    <property type="molecule type" value="mRNA"/>
</dbReference>
<dbReference type="PIR" id="T46612">
    <property type="entry name" value="T46612"/>
</dbReference>
<dbReference type="RefSeq" id="NP_062069.1">
    <property type="nucleotide sequence ID" value="NM_019196.2"/>
</dbReference>
<dbReference type="PDB" id="1Y76">
    <property type="method" value="NMR"/>
    <property type="chains" value="A/C=4-65"/>
</dbReference>
<dbReference type="PDB" id="5DTH">
    <property type="method" value="X-ray"/>
    <property type="resolution" value="1.95 A"/>
    <property type="chains" value="A/B/C/D=1312-1422"/>
</dbReference>
<dbReference type="PDBsum" id="1Y76"/>
<dbReference type="PDBsum" id="5DTH"/>
<dbReference type="SMR" id="O55164"/>
<dbReference type="BioGRID" id="248019">
    <property type="interactions" value="6"/>
</dbReference>
<dbReference type="CORUM" id="O55164"/>
<dbReference type="ELM" id="O55164"/>
<dbReference type="FunCoup" id="O55164">
    <property type="interactions" value="1841"/>
</dbReference>
<dbReference type="IntAct" id="O55164">
    <property type="interactions" value="1"/>
</dbReference>
<dbReference type="MINT" id="O55164"/>
<dbReference type="STRING" id="10116.ENSRNOP00000072433"/>
<dbReference type="GlyGen" id="O55164">
    <property type="glycosylation" value="1 site"/>
</dbReference>
<dbReference type="iPTMnet" id="O55164"/>
<dbReference type="PhosphoSitePlus" id="O55164"/>
<dbReference type="PaxDb" id="10116-ENSRNOP00000051321"/>
<dbReference type="GeneID" id="29365"/>
<dbReference type="KEGG" id="rno:29365"/>
<dbReference type="UCSC" id="RGD:3105">
    <property type="organism name" value="rat"/>
</dbReference>
<dbReference type="AGR" id="RGD:3105"/>
<dbReference type="CTD" id="8777"/>
<dbReference type="RGD" id="3105">
    <property type="gene designation" value="Mpdz"/>
</dbReference>
<dbReference type="VEuPathDB" id="HostDB:ENSRNOG00000007894"/>
<dbReference type="eggNOG" id="KOG3528">
    <property type="taxonomic scope" value="Eukaryota"/>
</dbReference>
<dbReference type="HOGENOM" id="CLU_002378_0_0_1"/>
<dbReference type="InParanoid" id="O55164"/>
<dbReference type="OrthoDB" id="6022711at2759"/>
<dbReference type="PhylomeDB" id="O55164"/>
<dbReference type="EvolutionaryTrace" id="O55164"/>
<dbReference type="PRO" id="PR:O55164"/>
<dbReference type="Proteomes" id="UP000002494">
    <property type="component" value="Chromosome 5"/>
</dbReference>
<dbReference type="Bgee" id="ENSRNOG00000007894">
    <property type="expression patterns" value="Expressed in quadriceps femoris and 19 other cell types or tissues"/>
</dbReference>
<dbReference type="ExpressionAtlas" id="O55164">
    <property type="expression patterns" value="baseline and differential"/>
</dbReference>
<dbReference type="GO" id="GO:0045177">
    <property type="term" value="C:apical part of cell"/>
    <property type="evidence" value="ECO:0000318"/>
    <property type="project" value="GO_Central"/>
</dbReference>
<dbReference type="GO" id="GO:0016324">
    <property type="term" value="C:apical plasma membrane"/>
    <property type="evidence" value="ECO:0000266"/>
    <property type="project" value="RGD"/>
</dbReference>
<dbReference type="GO" id="GO:0016327">
    <property type="term" value="C:apicolateral plasma membrane"/>
    <property type="evidence" value="ECO:0000266"/>
    <property type="project" value="RGD"/>
</dbReference>
<dbReference type="GO" id="GO:0005923">
    <property type="term" value="C:bicellular tight junction"/>
    <property type="evidence" value="ECO:0000266"/>
    <property type="project" value="RGD"/>
</dbReference>
<dbReference type="GO" id="GO:0005737">
    <property type="term" value="C:cytoplasm"/>
    <property type="evidence" value="ECO:0000266"/>
    <property type="project" value="RGD"/>
</dbReference>
<dbReference type="GO" id="GO:0031410">
    <property type="term" value="C:cytoplasmic vesicle"/>
    <property type="evidence" value="ECO:0000266"/>
    <property type="project" value="RGD"/>
</dbReference>
<dbReference type="GO" id="GO:0030425">
    <property type="term" value="C:dendrite"/>
    <property type="evidence" value="ECO:0007669"/>
    <property type="project" value="UniProtKB-SubCell"/>
</dbReference>
<dbReference type="GO" id="GO:0012505">
    <property type="term" value="C:endomembrane system"/>
    <property type="evidence" value="ECO:0007669"/>
    <property type="project" value="UniProtKB-SubCell"/>
</dbReference>
<dbReference type="GO" id="GO:0098978">
    <property type="term" value="C:glutamatergic synapse"/>
    <property type="evidence" value="ECO:0000314"/>
    <property type="project" value="SynGO"/>
</dbReference>
<dbReference type="GO" id="GO:0005886">
    <property type="term" value="C:plasma membrane"/>
    <property type="evidence" value="ECO:0000318"/>
    <property type="project" value="GO_Central"/>
</dbReference>
<dbReference type="GO" id="GO:0014069">
    <property type="term" value="C:postsynaptic density"/>
    <property type="evidence" value="ECO:0000314"/>
    <property type="project" value="SynGO"/>
</dbReference>
<dbReference type="GO" id="GO:0043220">
    <property type="term" value="C:Schmidt-Lanterman incisure"/>
    <property type="evidence" value="ECO:0000266"/>
    <property type="project" value="RGD"/>
</dbReference>
<dbReference type="GO" id="GO:0035003">
    <property type="term" value="C:subapical complex"/>
    <property type="evidence" value="ECO:0000266"/>
    <property type="project" value="RGD"/>
</dbReference>
<dbReference type="GO" id="GO:0045202">
    <property type="term" value="C:synapse"/>
    <property type="evidence" value="ECO:0000266"/>
    <property type="project" value="RGD"/>
</dbReference>
<dbReference type="GO" id="GO:0007155">
    <property type="term" value="P:cell adhesion"/>
    <property type="evidence" value="ECO:0000266"/>
    <property type="project" value="RGD"/>
</dbReference>
<dbReference type="GO" id="GO:0016358">
    <property type="term" value="P:dendrite development"/>
    <property type="evidence" value="ECO:0000266"/>
    <property type="project" value="RGD"/>
</dbReference>
<dbReference type="GO" id="GO:0006886">
    <property type="term" value="P:intracellular protein transport"/>
    <property type="evidence" value="ECO:0000266"/>
    <property type="project" value="RGD"/>
</dbReference>
<dbReference type="GO" id="GO:0035556">
    <property type="term" value="P:intracellular signal transduction"/>
    <property type="evidence" value="ECO:0000304"/>
    <property type="project" value="RGD"/>
</dbReference>
<dbReference type="GO" id="GO:0042552">
    <property type="term" value="P:myelination"/>
    <property type="evidence" value="ECO:0000353"/>
    <property type="project" value="RGD"/>
</dbReference>
<dbReference type="GO" id="GO:0120192">
    <property type="term" value="P:tight junction assembly"/>
    <property type="evidence" value="ECO:0000318"/>
    <property type="project" value="GO_Central"/>
</dbReference>
<dbReference type="CDD" id="cd06673">
    <property type="entry name" value="PDZ10_MUPP1-PDZ8_PATJ-like"/>
    <property type="match status" value="1"/>
</dbReference>
<dbReference type="CDD" id="cd06674">
    <property type="entry name" value="PDZ11_MUPP1-PDZ9_PATJ-like"/>
    <property type="match status" value="1"/>
</dbReference>
<dbReference type="CDD" id="cd06675">
    <property type="entry name" value="PDZ12_MUPP1-like"/>
    <property type="match status" value="1"/>
</dbReference>
<dbReference type="CDD" id="cd06676">
    <property type="entry name" value="PDZ13_MUPP1-like"/>
    <property type="match status" value="1"/>
</dbReference>
<dbReference type="CDD" id="cd06689">
    <property type="entry name" value="PDZ1_MUPP1-like"/>
    <property type="match status" value="1"/>
</dbReference>
<dbReference type="CDD" id="cd06667">
    <property type="entry name" value="PDZ2_MUPP1-like"/>
    <property type="match status" value="1"/>
</dbReference>
<dbReference type="CDD" id="cd06791">
    <property type="entry name" value="PDZ3_MUPP1-like"/>
    <property type="match status" value="1"/>
</dbReference>
<dbReference type="CDD" id="cd06668">
    <property type="entry name" value="PDZ4_MUPP1-like"/>
    <property type="match status" value="1"/>
</dbReference>
<dbReference type="CDD" id="cd06669">
    <property type="entry name" value="PDZ5_MUPP1-like"/>
    <property type="match status" value="1"/>
</dbReference>
<dbReference type="CDD" id="cd06670">
    <property type="entry name" value="PDZ6_MUPP1-like"/>
    <property type="match status" value="1"/>
</dbReference>
<dbReference type="CDD" id="cd06671">
    <property type="entry name" value="PDZ7_MUPP1-PD6_PATJ-like"/>
    <property type="match status" value="1"/>
</dbReference>
<dbReference type="CDD" id="cd06672">
    <property type="entry name" value="PDZ8_MUPP1-PDZ7_PATJ-PDZ2_INAD-like"/>
    <property type="match status" value="1"/>
</dbReference>
<dbReference type="CDD" id="cd10817">
    <property type="entry name" value="PDZ9_MUPP1-like"/>
    <property type="match status" value="1"/>
</dbReference>
<dbReference type="FunFam" id="2.30.42.10:FF:000140">
    <property type="entry name" value="Multiple PDZ domain crumbs cell polarity complex component"/>
    <property type="match status" value="1"/>
</dbReference>
<dbReference type="FunFam" id="2.30.42.10:FF:000070">
    <property type="entry name" value="Multiple PDZ domain protein"/>
    <property type="match status" value="1"/>
</dbReference>
<dbReference type="FunFam" id="2.30.42.10:FF:000038">
    <property type="entry name" value="Multiple PDZ domain protein isoform X1"/>
    <property type="match status" value="1"/>
</dbReference>
<dbReference type="FunFam" id="2.30.42.10:FF:000051">
    <property type="entry name" value="Multiple PDZ domain protein isoform X1"/>
    <property type="match status" value="1"/>
</dbReference>
<dbReference type="FunFam" id="2.30.42.10:FF:000108">
    <property type="entry name" value="Multiple PDZ domain protein isoform X1"/>
    <property type="match status" value="1"/>
</dbReference>
<dbReference type="FunFam" id="2.30.42.10:FF:000054">
    <property type="entry name" value="multiple PDZ domain protein isoform X1"/>
    <property type="match status" value="1"/>
</dbReference>
<dbReference type="FunFam" id="2.30.42.10:FF:000057">
    <property type="entry name" value="multiple PDZ domain protein isoform X1"/>
    <property type="match status" value="1"/>
</dbReference>
<dbReference type="FunFam" id="2.30.42.10:FF:000058">
    <property type="entry name" value="multiple PDZ domain protein isoform X1"/>
    <property type="match status" value="1"/>
</dbReference>
<dbReference type="FunFam" id="2.30.42.10:FF:000072">
    <property type="entry name" value="multiple PDZ domain protein isoform X1"/>
    <property type="match status" value="1"/>
</dbReference>
<dbReference type="FunFam" id="2.30.42.10:FF:000089">
    <property type="entry name" value="multiple PDZ domain protein isoform X1"/>
    <property type="match status" value="1"/>
</dbReference>
<dbReference type="FunFam" id="2.30.42.10:FF:000093">
    <property type="entry name" value="multiple PDZ domain protein isoform X1"/>
    <property type="match status" value="1"/>
</dbReference>
<dbReference type="FunFam" id="2.30.42.10:FF:000110">
    <property type="entry name" value="multiple PDZ domain protein isoform X2"/>
    <property type="match status" value="1"/>
</dbReference>
<dbReference type="Gene3D" id="2.30.42.10">
    <property type="match status" value="13"/>
</dbReference>
<dbReference type="Gene3D" id="1.10.287.650">
    <property type="entry name" value="L27 domain"/>
    <property type="match status" value="1"/>
</dbReference>
<dbReference type="InterPro" id="IPR015132">
    <property type="entry name" value="L27_2"/>
</dbReference>
<dbReference type="InterPro" id="IPR004172">
    <property type="entry name" value="L27_dom"/>
</dbReference>
<dbReference type="InterPro" id="IPR036892">
    <property type="entry name" value="L27_dom_sf"/>
</dbReference>
<dbReference type="InterPro" id="IPR032078">
    <property type="entry name" value="MPDZ_u10"/>
</dbReference>
<dbReference type="InterPro" id="IPR001478">
    <property type="entry name" value="PDZ"/>
</dbReference>
<dbReference type="InterPro" id="IPR051342">
    <property type="entry name" value="PDZ_scaffold"/>
</dbReference>
<dbReference type="InterPro" id="IPR036034">
    <property type="entry name" value="PDZ_sf"/>
</dbReference>
<dbReference type="PANTHER" id="PTHR19964">
    <property type="entry name" value="MULTIPLE PDZ DOMAIN PROTEIN"/>
    <property type="match status" value="1"/>
</dbReference>
<dbReference type="PANTHER" id="PTHR19964:SF97">
    <property type="entry name" value="PDZ DOMAIN-CONTAINING PROTEIN"/>
    <property type="match status" value="1"/>
</dbReference>
<dbReference type="Pfam" id="PF09045">
    <property type="entry name" value="L27_2"/>
    <property type="match status" value="1"/>
</dbReference>
<dbReference type="Pfam" id="PF16667">
    <property type="entry name" value="MPDZ_u10"/>
    <property type="match status" value="1"/>
</dbReference>
<dbReference type="Pfam" id="PF00595">
    <property type="entry name" value="PDZ"/>
    <property type="match status" value="13"/>
</dbReference>
<dbReference type="SMART" id="SM00569">
    <property type="entry name" value="L27"/>
    <property type="match status" value="1"/>
</dbReference>
<dbReference type="SMART" id="SM00228">
    <property type="entry name" value="PDZ"/>
    <property type="match status" value="13"/>
</dbReference>
<dbReference type="SUPFAM" id="SSF101288">
    <property type="entry name" value="L27 domain"/>
    <property type="match status" value="1"/>
</dbReference>
<dbReference type="SUPFAM" id="SSF50156">
    <property type="entry name" value="PDZ domain-like"/>
    <property type="match status" value="13"/>
</dbReference>
<dbReference type="PROSITE" id="PS51022">
    <property type="entry name" value="L27"/>
    <property type="match status" value="1"/>
</dbReference>
<dbReference type="PROSITE" id="PS50106">
    <property type="entry name" value="PDZ"/>
    <property type="match status" value="13"/>
</dbReference>
<keyword id="KW-0002">3D-structure</keyword>
<keyword id="KW-0965">Cell junction</keyword>
<keyword id="KW-1003">Cell membrane</keyword>
<keyword id="KW-0966">Cell projection</keyword>
<keyword id="KW-0472">Membrane</keyword>
<keyword id="KW-0488">Methylation</keyword>
<keyword id="KW-0597">Phosphoprotein</keyword>
<keyword id="KW-1185">Reference proteome</keyword>
<keyword id="KW-0677">Repeat</keyword>
<keyword id="KW-0770">Synapse</keyword>
<keyword id="KW-0771">Synaptosome</keyword>
<keyword id="KW-0796">Tight junction</keyword>
<gene>
    <name type="primary">Mpdz</name>
    <name type="synonym">Mupp1</name>
</gene>
<reference key="1">
    <citation type="journal article" date="1998" name="FEBS Lett.">
        <title>Cloning and characterization of MUPP1, a novel PDZ domain protein.</title>
        <authorList>
            <person name="Ullmer C."/>
            <person name="Schmuck K."/>
            <person name="Figge A."/>
            <person name="Luebbert H."/>
        </authorList>
    </citation>
    <scope>NUCLEOTIDE SEQUENCE [MRNA]</scope>
    <source>
        <tissue>Brain</tissue>
    </source>
</reference>
<reference key="2">
    <citation type="journal article" date="2000" name="J. Virol.">
        <title>Multi-PDZ domain protein MUPP1 is a cellular target for both adenovirus E4-ORF1 and high-risk papillomavirus type 18 E6 oncoproteins.</title>
        <authorList>
            <person name="Lee S.S."/>
            <person name="Glaunsinger B."/>
            <person name="Mantovani F."/>
            <person name="Banks L."/>
            <person name="Javier R.T."/>
        </authorList>
    </citation>
    <scope>SUBCELLULAR LOCATION</scope>
    <scope>DOMAINS</scope>
</reference>
<reference key="3">
    <citation type="journal article" date="2001" name="J. Biol. Chem.">
        <title>Interaction of serotonin 5-hydroxytryptamine type 2C receptors with PDZ10 of the multi-PDZ domain protein MUPP1.</title>
        <authorList>
            <person name="Becamel C."/>
            <person name="Figge A."/>
            <person name="Poliak S."/>
            <person name="Dumuis A."/>
            <person name="Peles E."/>
            <person name="Bockaert J."/>
            <person name="Luebbert H."/>
            <person name="Ullmer C."/>
        </authorList>
    </citation>
    <scope>FUNCTION</scope>
    <scope>INTERACTION WITH HTR2C</scope>
    <scope>TISSUE SPECIFICITY</scope>
    <scope>DOMAIN</scope>
    <scope>SUBCELLULAR LOCATION</scope>
</reference>
<reference key="4">
    <citation type="journal article" date="2002" name="J. Cell Biol.">
        <title>Distinct claudins and associated PDZ proteins form different autotypic tight junctions in myelinating Schwann cells.</title>
        <authorList>
            <person name="Poliak S."/>
            <person name="Matlis S."/>
            <person name="Ullmer C."/>
            <person name="Scherer S.S."/>
            <person name="Peles E."/>
        </authorList>
    </citation>
    <scope>SUBCELLULAR LOCATION</scope>
    <scope>INTERACTION WITH CLDN5</scope>
</reference>
<reference key="5">
    <citation type="journal article" date="2004" name="Neuron">
        <title>SynGAP-MUPP1-CaMKII synaptic complexes regulate p38 MAP kinase activity and NMDA receptor-dependent synaptic AMPA receptor potentiation.</title>
        <authorList>
            <person name="Krapivinsky G."/>
            <person name="Medina I."/>
            <person name="Krapivinsky L."/>
            <person name="Gapon S."/>
            <person name="Clapham D.E."/>
        </authorList>
    </citation>
    <scope>SUBCELLULAR LOCATION</scope>
    <scope>INTERACTION WITH DLG4; GRIN1; SYNGAP1; CAMK2A AND CAMK2B</scope>
    <scope>FUNCTION</scope>
</reference>
<reference key="6">
    <citation type="journal article" date="2012" name="Nat. Commun.">
        <title>Quantitative maps of protein phosphorylation sites across 14 different rat organs and tissues.</title>
        <authorList>
            <person name="Lundby A."/>
            <person name="Secher A."/>
            <person name="Lage K."/>
            <person name="Nordsborg N.B."/>
            <person name="Dmytriyev A."/>
            <person name="Lundby C."/>
            <person name="Olsen J.V."/>
        </authorList>
    </citation>
    <scope>PHOSPHORYLATION [LARGE SCALE ANALYSIS] AT SER-1808</scope>
    <scope>IDENTIFICATION BY MASS SPECTROMETRY [LARGE SCALE ANALYSIS]</scope>
</reference>
<reference key="7">
    <citation type="journal article" date="2005" name="Proc. Natl. Acad. Sci. U.S.A.">
        <title>A unified assembly mode revealed by the structures of tetrameric L27 domain complexes formed by mLin-2/mLin-7 and Patj/Pals1 scaffold proteins.</title>
        <authorList>
            <person name="Feng W."/>
            <person name="Long J.-F."/>
            <person name="Zhang M."/>
        </authorList>
    </citation>
    <scope>STRUCTURE BY NMR OF 21-59</scope>
    <scope>INTERACTION WITH PALS1</scope>
</reference>
<evidence type="ECO:0000250" key="1"/>
<evidence type="ECO:0000250" key="2">
    <source>
        <dbReference type="UniProtKB" id="O75970"/>
    </source>
</evidence>
<evidence type="ECO:0000250" key="3">
    <source>
        <dbReference type="UniProtKB" id="Q8VBX6"/>
    </source>
</evidence>
<evidence type="ECO:0000255" key="4">
    <source>
        <dbReference type="PROSITE-ProRule" id="PRU00143"/>
    </source>
</evidence>
<evidence type="ECO:0000255" key="5">
    <source>
        <dbReference type="PROSITE-ProRule" id="PRU00365"/>
    </source>
</evidence>
<evidence type="ECO:0000256" key="6">
    <source>
        <dbReference type="SAM" id="MobiDB-lite"/>
    </source>
</evidence>
<evidence type="ECO:0000269" key="7">
    <source>
    </source>
</evidence>
<evidence type="ECO:0000269" key="8">
    <source>
    </source>
</evidence>
<evidence type="ECO:0000269" key="9">
    <source>
    </source>
</evidence>
<evidence type="ECO:0000269" key="10">
    <source>
    </source>
</evidence>
<evidence type="ECO:0000269" key="11">
    <source>
    </source>
</evidence>
<evidence type="ECO:0007744" key="12">
    <source>
    </source>
</evidence>
<evidence type="ECO:0007829" key="13">
    <source>
        <dbReference type="PDB" id="1Y76"/>
    </source>
</evidence>
<evidence type="ECO:0007829" key="14">
    <source>
        <dbReference type="PDB" id="5DTH"/>
    </source>
</evidence>
<accession>O55164</accession>
<protein>
    <recommendedName>
        <fullName>Multiple PDZ domain protein</fullName>
    </recommendedName>
    <alternativeName>
        <fullName>Multi-PDZ domain protein 1</fullName>
    </alternativeName>
</protein>